<comment type="function">
    <text evidence="1">Reversibly catalyzes the transfer of the carbamoyl group from carbamoyl phosphate (CP) to the N(epsilon) atom of ornithine (ORN) to produce L-citrulline, which is a substrate for argininosuccinate synthetase, the enzyme involved in the final step in arginine biosynthesis.</text>
</comment>
<comment type="catalytic activity">
    <reaction>
        <text>carbamoyl phosphate + L-ornithine = L-citrulline + phosphate + H(+)</text>
        <dbReference type="Rhea" id="RHEA:19513"/>
        <dbReference type="ChEBI" id="CHEBI:15378"/>
        <dbReference type="ChEBI" id="CHEBI:43474"/>
        <dbReference type="ChEBI" id="CHEBI:46911"/>
        <dbReference type="ChEBI" id="CHEBI:57743"/>
        <dbReference type="ChEBI" id="CHEBI:58228"/>
        <dbReference type="EC" id="2.1.3.3"/>
    </reaction>
</comment>
<comment type="pathway">
    <text>Amino-acid biosynthesis; L-arginine biosynthesis; L-arginine from L-ornithine and carbamoyl phosphate: step 1/3.</text>
</comment>
<comment type="subunit">
    <text evidence="1">Homotrimer or homohexamer.</text>
</comment>
<comment type="subcellular location">
    <subcellularLocation>
        <location evidence="1">Cytoplasm</location>
    </subcellularLocation>
</comment>
<comment type="similarity">
    <text evidence="3">Belongs to the aspartate/ornithine carbamoyltransferase superfamily. OTCase family.</text>
</comment>
<proteinExistence type="inferred from homology"/>
<organism>
    <name type="scientific">Mycobacterium tuberculosis (strain CDC 1551 / Oshkosh)</name>
    <dbReference type="NCBI Taxonomy" id="83331"/>
    <lineage>
        <taxon>Bacteria</taxon>
        <taxon>Bacillati</taxon>
        <taxon>Actinomycetota</taxon>
        <taxon>Actinomycetes</taxon>
        <taxon>Mycobacteriales</taxon>
        <taxon>Mycobacteriaceae</taxon>
        <taxon>Mycobacterium</taxon>
        <taxon>Mycobacterium tuberculosis complex</taxon>
    </lineage>
</organism>
<reference key="1">
    <citation type="journal article" date="2002" name="J. Bacteriol.">
        <title>Whole-genome comparison of Mycobacterium tuberculosis clinical and laboratory strains.</title>
        <authorList>
            <person name="Fleischmann R.D."/>
            <person name="Alland D."/>
            <person name="Eisen J.A."/>
            <person name="Carpenter L."/>
            <person name="White O."/>
            <person name="Peterson J.D."/>
            <person name="DeBoy R.T."/>
            <person name="Dodson R.J."/>
            <person name="Gwinn M.L."/>
            <person name="Haft D.H."/>
            <person name="Hickey E.K."/>
            <person name="Kolonay J.F."/>
            <person name="Nelson W.C."/>
            <person name="Umayam L.A."/>
            <person name="Ermolaeva M.D."/>
            <person name="Salzberg S.L."/>
            <person name="Delcher A."/>
            <person name="Utterback T.R."/>
            <person name="Weidman J.F."/>
            <person name="Khouri H.M."/>
            <person name="Gill J."/>
            <person name="Mikula A."/>
            <person name="Bishai W."/>
            <person name="Jacobs W.R. Jr."/>
            <person name="Venter J.C."/>
            <person name="Fraser C.M."/>
        </authorList>
    </citation>
    <scope>NUCLEOTIDE SEQUENCE [LARGE SCALE GENOMIC DNA]</scope>
    <source>
        <strain>CDC 1551 / Oshkosh</strain>
    </source>
</reference>
<name>OTC_MYCTO</name>
<protein>
    <recommendedName>
        <fullName>Ornithine carbamoyltransferase</fullName>
        <shortName>OTCase</shortName>
        <ecNumber>2.1.3.3</ecNumber>
    </recommendedName>
</protein>
<feature type="chain" id="PRO_0000427947" description="Ornithine carbamoyltransferase">
    <location>
        <begin position="1"/>
        <end position="307"/>
    </location>
</feature>
<feature type="binding site" evidence="2">
    <location>
        <begin position="50"/>
        <end position="53"/>
    </location>
    <ligand>
        <name>carbamoyl phosphate</name>
        <dbReference type="ChEBI" id="CHEBI:58228"/>
    </ligand>
</feature>
<feature type="binding site" evidence="2">
    <location>
        <position position="77"/>
    </location>
    <ligand>
        <name>carbamoyl phosphate</name>
        <dbReference type="ChEBI" id="CHEBI:58228"/>
    </ligand>
</feature>
<feature type="binding site" evidence="2">
    <location>
        <position position="101"/>
    </location>
    <ligand>
        <name>carbamoyl phosphate</name>
        <dbReference type="ChEBI" id="CHEBI:58228"/>
    </ligand>
</feature>
<feature type="binding site" evidence="2">
    <location>
        <begin position="128"/>
        <end position="131"/>
    </location>
    <ligand>
        <name>carbamoyl phosphate</name>
        <dbReference type="ChEBI" id="CHEBI:58228"/>
    </ligand>
</feature>
<feature type="binding site" evidence="2">
    <location>
        <position position="160"/>
    </location>
    <ligand>
        <name>L-ornithine</name>
        <dbReference type="ChEBI" id="CHEBI:46911"/>
    </ligand>
</feature>
<feature type="binding site" evidence="2">
    <location>
        <position position="224"/>
    </location>
    <ligand>
        <name>L-ornithine</name>
        <dbReference type="ChEBI" id="CHEBI:46911"/>
    </ligand>
</feature>
<feature type="binding site" evidence="2">
    <location>
        <begin position="228"/>
        <end position="229"/>
    </location>
    <ligand>
        <name>L-ornithine</name>
        <dbReference type="ChEBI" id="CHEBI:46911"/>
    </ligand>
</feature>
<feature type="binding site" evidence="2">
    <location>
        <begin position="264"/>
        <end position="265"/>
    </location>
    <ligand>
        <name>carbamoyl phosphate</name>
        <dbReference type="ChEBI" id="CHEBI:58228"/>
    </ligand>
</feature>
<feature type="binding site" evidence="2">
    <location>
        <position position="292"/>
    </location>
    <ligand>
        <name>carbamoyl phosphate</name>
        <dbReference type="ChEBI" id="CHEBI:58228"/>
    </ligand>
</feature>
<sequence>MIRHFLRDDDLSPAEQAEVLELAAELKKDPVSRRPLQGPRGVAVIFDKNSTRTRFSFELGIAQLGGHAVVVDSGSTQLGRDETLQDTAKVLSRYVDAIVWRTFGQERLDAMASVATVPVINALSDEFHPCQVLADLQTIAERKGALRGLRLSYFGDGANNMAHSLLLGGVTAGIHVTVAAPEGFLPDPSVRAAAERRAQDTGASVTVTADAHAAAAGADVLVTDTWTSMGQENDGLDRVKPFRPFQLNSRLLALADSDAIVLHCLPAHRGDEITDAVMDGPASAVWDEAENRLHAQKALLVWLLERS</sequence>
<accession>P9WIT8</accession>
<accession>L0T7B5</accession>
<accession>P0A5M8</accession>
<accession>P94991</accession>
<accession>Q02095</accession>
<gene>
    <name type="primary">argF</name>
    <name type="ordered locus">MT1694</name>
</gene>
<dbReference type="EC" id="2.1.3.3"/>
<dbReference type="EMBL" id="AE000516">
    <property type="protein sequence ID" value="AAK45963.1"/>
    <property type="molecule type" value="Genomic_DNA"/>
</dbReference>
<dbReference type="PIR" id="C70621">
    <property type="entry name" value="C70621"/>
</dbReference>
<dbReference type="RefSeq" id="WP_003408165.1">
    <property type="nucleotide sequence ID" value="NZ_KK341227.1"/>
</dbReference>
<dbReference type="SMR" id="P9WIT8"/>
<dbReference type="KEGG" id="mtc:MT1694"/>
<dbReference type="PATRIC" id="fig|83331.31.peg.1821"/>
<dbReference type="HOGENOM" id="CLU_043846_3_2_11"/>
<dbReference type="UniPathway" id="UPA00068">
    <property type="reaction ID" value="UER00112"/>
</dbReference>
<dbReference type="Proteomes" id="UP000001020">
    <property type="component" value="Chromosome"/>
</dbReference>
<dbReference type="GO" id="GO:0005737">
    <property type="term" value="C:cytoplasm"/>
    <property type="evidence" value="ECO:0007669"/>
    <property type="project" value="UniProtKB-SubCell"/>
</dbReference>
<dbReference type="GO" id="GO:0016597">
    <property type="term" value="F:amino acid binding"/>
    <property type="evidence" value="ECO:0007669"/>
    <property type="project" value="InterPro"/>
</dbReference>
<dbReference type="GO" id="GO:0004585">
    <property type="term" value="F:ornithine carbamoyltransferase activity"/>
    <property type="evidence" value="ECO:0007669"/>
    <property type="project" value="UniProtKB-UniRule"/>
</dbReference>
<dbReference type="GO" id="GO:0042450">
    <property type="term" value="P:arginine biosynthetic process via ornithine"/>
    <property type="evidence" value="ECO:0007669"/>
    <property type="project" value="TreeGrafter"/>
</dbReference>
<dbReference type="GO" id="GO:0019240">
    <property type="term" value="P:citrulline biosynthetic process"/>
    <property type="evidence" value="ECO:0007669"/>
    <property type="project" value="TreeGrafter"/>
</dbReference>
<dbReference type="GO" id="GO:0006526">
    <property type="term" value="P:L-arginine biosynthetic process"/>
    <property type="evidence" value="ECO:0007669"/>
    <property type="project" value="UniProtKB-UniRule"/>
</dbReference>
<dbReference type="FunFam" id="3.40.50.1370:FF:000008">
    <property type="entry name" value="Ornithine carbamoyltransferase"/>
    <property type="match status" value="1"/>
</dbReference>
<dbReference type="Gene3D" id="3.40.50.1370">
    <property type="entry name" value="Aspartate/ornithine carbamoyltransferase"/>
    <property type="match status" value="2"/>
</dbReference>
<dbReference type="HAMAP" id="MF_01109">
    <property type="entry name" value="OTCase"/>
    <property type="match status" value="1"/>
</dbReference>
<dbReference type="InterPro" id="IPR006132">
    <property type="entry name" value="Asp/Orn_carbamoyltranf_P-bd"/>
</dbReference>
<dbReference type="InterPro" id="IPR006130">
    <property type="entry name" value="Asp/Orn_carbamoylTrfase"/>
</dbReference>
<dbReference type="InterPro" id="IPR036901">
    <property type="entry name" value="Asp/Orn_carbamoylTrfase_sf"/>
</dbReference>
<dbReference type="InterPro" id="IPR006131">
    <property type="entry name" value="Asp_carbamoyltransf_Asp/Orn-bd"/>
</dbReference>
<dbReference type="InterPro" id="IPR002292">
    <property type="entry name" value="Orn/put_carbamltrans"/>
</dbReference>
<dbReference type="InterPro" id="IPR024904">
    <property type="entry name" value="OTCase_ArgI"/>
</dbReference>
<dbReference type="NCBIfam" id="TIGR00658">
    <property type="entry name" value="orni_carb_tr"/>
    <property type="match status" value="1"/>
</dbReference>
<dbReference type="NCBIfam" id="NF001986">
    <property type="entry name" value="PRK00779.1"/>
    <property type="match status" value="1"/>
</dbReference>
<dbReference type="PANTHER" id="PTHR45753">
    <property type="entry name" value="ORNITHINE CARBAMOYLTRANSFERASE, MITOCHONDRIAL"/>
    <property type="match status" value="1"/>
</dbReference>
<dbReference type="PANTHER" id="PTHR45753:SF3">
    <property type="entry name" value="ORNITHINE TRANSCARBAMYLASE, MITOCHONDRIAL"/>
    <property type="match status" value="1"/>
</dbReference>
<dbReference type="Pfam" id="PF00185">
    <property type="entry name" value="OTCace"/>
    <property type="match status" value="1"/>
</dbReference>
<dbReference type="Pfam" id="PF02729">
    <property type="entry name" value="OTCace_N"/>
    <property type="match status" value="1"/>
</dbReference>
<dbReference type="PRINTS" id="PR00100">
    <property type="entry name" value="AOTCASE"/>
</dbReference>
<dbReference type="PRINTS" id="PR00102">
    <property type="entry name" value="OTCASE"/>
</dbReference>
<dbReference type="SUPFAM" id="SSF53671">
    <property type="entry name" value="Aspartate/ornithine carbamoyltransferase"/>
    <property type="match status" value="1"/>
</dbReference>
<dbReference type="PROSITE" id="PS00097">
    <property type="entry name" value="CARBAMOYLTRANSFERASE"/>
    <property type="match status" value="1"/>
</dbReference>
<evidence type="ECO:0000250" key="1"/>
<evidence type="ECO:0000255" key="2">
    <source>
        <dbReference type="HAMAP-Rule" id="MF_01109"/>
    </source>
</evidence>
<evidence type="ECO:0000305" key="3"/>
<keyword id="KW-0028">Amino-acid biosynthesis</keyword>
<keyword id="KW-0055">Arginine biosynthesis</keyword>
<keyword id="KW-0963">Cytoplasm</keyword>
<keyword id="KW-1185">Reference proteome</keyword>
<keyword id="KW-0808">Transferase</keyword>